<comment type="function">
    <text evidence="1">Catalyzes the interconversion of beta-pyran and beta-furan forms of D-ribose.</text>
</comment>
<comment type="catalytic activity">
    <reaction evidence="1">
        <text>beta-D-ribopyranose = beta-D-ribofuranose</text>
        <dbReference type="Rhea" id="RHEA:25432"/>
        <dbReference type="ChEBI" id="CHEBI:27476"/>
        <dbReference type="ChEBI" id="CHEBI:47002"/>
        <dbReference type="EC" id="5.4.99.62"/>
    </reaction>
</comment>
<comment type="pathway">
    <text evidence="1">Carbohydrate metabolism; D-ribose degradation; D-ribose 5-phosphate from beta-D-ribopyranose: step 1/2.</text>
</comment>
<comment type="subunit">
    <text evidence="1">Homodecamer.</text>
</comment>
<comment type="subcellular location">
    <subcellularLocation>
        <location evidence="1">Cytoplasm</location>
    </subcellularLocation>
</comment>
<comment type="similarity">
    <text evidence="1">Belongs to the RbsD / FucU family. RbsD subfamily.</text>
</comment>
<keyword id="KW-0002">3D-structure</keyword>
<keyword id="KW-0119">Carbohydrate metabolism</keyword>
<keyword id="KW-0963">Cytoplasm</keyword>
<keyword id="KW-0413">Isomerase</keyword>
<keyword id="KW-1185">Reference proteome</keyword>
<feature type="chain" id="PRO_0000346271" description="D-ribose pyranase">
    <location>
        <begin position="1"/>
        <end position="134"/>
    </location>
</feature>
<feature type="active site" description="Proton donor" evidence="1">
    <location>
        <position position="20"/>
    </location>
</feature>
<feature type="binding site" evidence="1">
    <location>
        <position position="28"/>
    </location>
    <ligand>
        <name>substrate</name>
    </ligand>
</feature>
<feature type="binding site" evidence="1">
    <location>
        <position position="99"/>
    </location>
    <ligand>
        <name>substrate</name>
    </ligand>
</feature>
<feature type="binding site" evidence="1">
    <location>
        <begin position="123"/>
        <end position="125"/>
    </location>
    <ligand>
        <name>substrate</name>
    </ligand>
</feature>
<feature type="helix" evidence="2">
    <location>
        <begin position="9"/>
        <end position="16"/>
    </location>
</feature>
<feature type="strand" evidence="2">
    <location>
        <begin position="23"/>
        <end position="27"/>
    </location>
</feature>
<feature type="strand" evidence="2">
    <location>
        <begin position="39"/>
        <end position="41"/>
    </location>
</feature>
<feature type="helix" evidence="2">
    <location>
        <begin position="51"/>
        <end position="59"/>
    </location>
</feature>
<feature type="strand" evidence="2">
    <location>
        <begin position="64"/>
        <end position="70"/>
    </location>
</feature>
<feature type="helix" evidence="2">
    <location>
        <begin position="73"/>
        <end position="76"/>
    </location>
</feature>
<feature type="helix" evidence="2">
    <location>
        <begin position="78"/>
        <end position="87"/>
    </location>
</feature>
<feature type="strand" evidence="2">
    <location>
        <begin position="92"/>
        <end position="97"/>
    </location>
</feature>
<feature type="helix" evidence="2">
    <location>
        <begin position="99"/>
        <end position="104"/>
    </location>
</feature>
<feature type="helix" evidence="2">
    <location>
        <begin position="105"/>
        <end position="107"/>
    </location>
</feature>
<feature type="strand" evidence="2">
    <location>
        <begin position="111"/>
        <end position="116"/>
    </location>
</feature>
<feature type="strand" evidence="2">
    <location>
        <begin position="126"/>
        <end position="130"/>
    </location>
</feature>
<organism>
    <name type="scientific">Staphylococcus aureus (strain NCTC 8325 / PS 47)</name>
    <dbReference type="NCBI Taxonomy" id="93061"/>
    <lineage>
        <taxon>Bacteria</taxon>
        <taxon>Bacillati</taxon>
        <taxon>Bacillota</taxon>
        <taxon>Bacilli</taxon>
        <taxon>Bacillales</taxon>
        <taxon>Staphylococcaceae</taxon>
        <taxon>Staphylococcus</taxon>
    </lineage>
</organism>
<gene>
    <name evidence="1" type="primary">rbsD</name>
    <name type="ordered locus">SAOUHSC_00240</name>
</gene>
<name>RBSD_STAA8</name>
<evidence type="ECO:0000255" key="1">
    <source>
        <dbReference type="HAMAP-Rule" id="MF_01661"/>
    </source>
</evidence>
<evidence type="ECO:0007829" key="2">
    <source>
        <dbReference type="PDB" id="3P12"/>
    </source>
</evidence>
<accession>Q2G1A5</accession>
<sequence length="134" mass="15165">MKKSAVLNEHISKAIATIGHFDLLTINDAGMPIPNDHRRIDLAVTKNLPRFIDVLATVLEEMEIQKIYLAEEIKEHNPTQLQQIKQLISSEIEIIFIPHEEMKSNLAHPLNKGNIRTGETTPYSNIALESNVTF</sequence>
<protein>
    <recommendedName>
        <fullName evidence="1">D-ribose pyranase</fullName>
        <ecNumber evidence="1">5.4.99.62</ecNumber>
    </recommendedName>
</protein>
<dbReference type="EC" id="5.4.99.62" evidence="1"/>
<dbReference type="EMBL" id="CP000253">
    <property type="protein sequence ID" value="ABD29415.1"/>
    <property type="molecule type" value="Genomic_DNA"/>
</dbReference>
<dbReference type="RefSeq" id="WP_000747873.1">
    <property type="nucleotide sequence ID" value="NZ_LS483365.1"/>
</dbReference>
<dbReference type="RefSeq" id="YP_498835.1">
    <property type="nucleotide sequence ID" value="NC_007795.1"/>
</dbReference>
<dbReference type="PDB" id="3P12">
    <property type="method" value="X-ray"/>
    <property type="resolution" value="2.35 A"/>
    <property type="chains" value="A/B/C/D=1-134"/>
</dbReference>
<dbReference type="PDB" id="3P13">
    <property type="method" value="X-ray"/>
    <property type="resolution" value="2.35 A"/>
    <property type="chains" value="A/B/C/D=1-134"/>
</dbReference>
<dbReference type="PDBsum" id="3P12"/>
<dbReference type="PDBsum" id="3P13"/>
<dbReference type="SMR" id="Q2G1A5"/>
<dbReference type="STRING" id="93061.SAOUHSC_00240"/>
<dbReference type="PaxDb" id="1280-SAXN108_0250"/>
<dbReference type="GeneID" id="3919260"/>
<dbReference type="KEGG" id="sao:SAOUHSC_00240"/>
<dbReference type="PATRIC" id="fig|93061.5.peg.220"/>
<dbReference type="eggNOG" id="COG1869">
    <property type="taxonomic scope" value="Bacteria"/>
</dbReference>
<dbReference type="HOGENOM" id="CLU_135498_0_0_9"/>
<dbReference type="OrthoDB" id="9805009at2"/>
<dbReference type="UniPathway" id="UPA00916">
    <property type="reaction ID" value="UER00888"/>
</dbReference>
<dbReference type="EvolutionaryTrace" id="Q2G1A5"/>
<dbReference type="PRO" id="PR:Q2G1A5"/>
<dbReference type="Proteomes" id="UP000008816">
    <property type="component" value="Chromosome"/>
</dbReference>
<dbReference type="GO" id="GO:0005829">
    <property type="term" value="C:cytosol"/>
    <property type="evidence" value="ECO:0000318"/>
    <property type="project" value="GO_Central"/>
</dbReference>
<dbReference type="GO" id="GO:0062193">
    <property type="term" value="F:D-ribose pyranase activity"/>
    <property type="evidence" value="ECO:0007669"/>
    <property type="project" value="UniProtKB-EC"/>
</dbReference>
<dbReference type="GO" id="GO:0016872">
    <property type="term" value="F:intramolecular lyase activity"/>
    <property type="evidence" value="ECO:0007669"/>
    <property type="project" value="UniProtKB-UniRule"/>
</dbReference>
<dbReference type="GO" id="GO:0016866">
    <property type="term" value="F:intramolecular transferase activity"/>
    <property type="evidence" value="ECO:0000318"/>
    <property type="project" value="GO_Central"/>
</dbReference>
<dbReference type="GO" id="GO:0048029">
    <property type="term" value="F:monosaccharide binding"/>
    <property type="evidence" value="ECO:0007669"/>
    <property type="project" value="InterPro"/>
</dbReference>
<dbReference type="GO" id="GO:0019303">
    <property type="term" value="P:D-ribose catabolic process"/>
    <property type="evidence" value="ECO:0000318"/>
    <property type="project" value="GO_Central"/>
</dbReference>
<dbReference type="FunFam" id="3.40.1650.10:FF:000004">
    <property type="entry name" value="D-ribose pyranase"/>
    <property type="match status" value="1"/>
</dbReference>
<dbReference type="Gene3D" id="3.40.1650.10">
    <property type="entry name" value="RbsD-like domain"/>
    <property type="match status" value="1"/>
</dbReference>
<dbReference type="HAMAP" id="MF_01661">
    <property type="entry name" value="D_rib_pyranase"/>
    <property type="match status" value="1"/>
</dbReference>
<dbReference type="InterPro" id="IPR023064">
    <property type="entry name" value="D-ribose_pyranase"/>
</dbReference>
<dbReference type="InterPro" id="IPR023750">
    <property type="entry name" value="RbsD-like_sf"/>
</dbReference>
<dbReference type="InterPro" id="IPR007721">
    <property type="entry name" value="RbsD_FucU"/>
</dbReference>
<dbReference type="NCBIfam" id="NF008761">
    <property type="entry name" value="PRK11797.1"/>
    <property type="match status" value="1"/>
</dbReference>
<dbReference type="PANTHER" id="PTHR37831">
    <property type="entry name" value="D-RIBOSE PYRANASE"/>
    <property type="match status" value="1"/>
</dbReference>
<dbReference type="PANTHER" id="PTHR37831:SF1">
    <property type="entry name" value="D-RIBOSE PYRANASE"/>
    <property type="match status" value="1"/>
</dbReference>
<dbReference type="Pfam" id="PF05025">
    <property type="entry name" value="RbsD_FucU"/>
    <property type="match status" value="1"/>
</dbReference>
<dbReference type="SUPFAM" id="SSF102546">
    <property type="entry name" value="RbsD-like"/>
    <property type="match status" value="1"/>
</dbReference>
<reference key="1">
    <citation type="book" date="2006" name="Gram positive pathogens, 2nd edition">
        <title>The Staphylococcus aureus NCTC 8325 genome.</title>
        <editorList>
            <person name="Fischetti V."/>
            <person name="Novick R."/>
            <person name="Ferretti J."/>
            <person name="Portnoy D."/>
            <person name="Rood J."/>
        </editorList>
        <authorList>
            <person name="Gillaspy A.F."/>
            <person name="Worrell V."/>
            <person name="Orvis J."/>
            <person name="Roe B.A."/>
            <person name="Dyer D.W."/>
            <person name="Iandolo J.J."/>
        </authorList>
    </citation>
    <scope>NUCLEOTIDE SEQUENCE [LARGE SCALE GENOMIC DNA]</scope>
    <source>
        <strain>NCTC 8325 / PS 47</strain>
    </source>
</reference>
<proteinExistence type="evidence at protein level"/>